<keyword id="KW-0378">Hydrolase</keyword>
<keyword id="KW-0443">Lipid metabolism</keyword>
<keyword id="KW-0472">Membrane</keyword>
<keyword id="KW-1185">Reference proteome</keyword>
<keyword id="KW-0812">Transmembrane</keyword>
<keyword id="KW-1133">Transmembrane helix</keyword>
<gene>
    <name evidence="1" type="primary">ABHD16A</name>
    <name evidence="1" type="synonym">BAT5</name>
</gene>
<organism>
    <name type="scientific">Bos taurus</name>
    <name type="common">Bovine</name>
    <dbReference type="NCBI Taxonomy" id="9913"/>
    <lineage>
        <taxon>Eukaryota</taxon>
        <taxon>Metazoa</taxon>
        <taxon>Chordata</taxon>
        <taxon>Craniata</taxon>
        <taxon>Vertebrata</taxon>
        <taxon>Euteleostomi</taxon>
        <taxon>Mammalia</taxon>
        <taxon>Eutheria</taxon>
        <taxon>Laurasiatheria</taxon>
        <taxon>Artiodactyla</taxon>
        <taxon>Ruminantia</taxon>
        <taxon>Pecora</taxon>
        <taxon>Bovidae</taxon>
        <taxon>Bovinae</taxon>
        <taxon>Bos</taxon>
    </lineage>
</organism>
<dbReference type="EC" id="3.1.-.-" evidence="3"/>
<dbReference type="EC" id="3.1.1.23" evidence="1"/>
<dbReference type="EMBL" id="BT025421">
    <property type="protein sequence ID" value="ABF57377.1"/>
    <property type="molecule type" value="mRNA"/>
</dbReference>
<dbReference type="RefSeq" id="NP_001069073.1">
    <property type="nucleotide sequence ID" value="NM_001075605.1"/>
</dbReference>
<dbReference type="SMR" id="Q1JPD2"/>
<dbReference type="FunCoup" id="Q1JPD2">
    <property type="interactions" value="1967"/>
</dbReference>
<dbReference type="STRING" id="9913.ENSBTAP00000062171"/>
<dbReference type="ESTHER" id="bovin-ABHD16A">
    <property type="family name" value="ABHD16"/>
</dbReference>
<dbReference type="PaxDb" id="9913-ENSBTAP00000000755"/>
<dbReference type="GeneID" id="513252"/>
<dbReference type="KEGG" id="bta:513252"/>
<dbReference type="CTD" id="7920"/>
<dbReference type="eggNOG" id="KOG1553">
    <property type="taxonomic scope" value="Eukaryota"/>
</dbReference>
<dbReference type="InParanoid" id="Q1JPD2"/>
<dbReference type="OrthoDB" id="6412627at2759"/>
<dbReference type="Proteomes" id="UP000009136">
    <property type="component" value="Unplaced"/>
</dbReference>
<dbReference type="GO" id="GO:0016020">
    <property type="term" value="C:membrane"/>
    <property type="evidence" value="ECO:0007669"/>
    <property type="project" value="UniProtKB-SubCell"/>
</dbReference>
<dbReference type="GO" id="GO:0047372">
    <property type="term" value="F:monoacylglycerol lipase activity"/>
    <property type="evidence" value="ECO:0000250"/>
    <property type="project" value="UniProtKB"/>
</dbReference>
<dbReference type="GO" id="GO:0004620">
    <property type="term" value="F:phospholipase activity"/>
    <property type="evidence" value="ECO:0000250"/>
    <property type="project" value="UniProtKB"/>
</dbReference>
<dbReference type="GO" id="GO:0052651">
    <property type="term" value="P:monoacylglycerol catabolic process"/>
    <property type="evidence" value="ECO:0000250"/>
    <property type="project" value="UniProtKB"/>
</dbReference>
<dbReference type="GO" id="GO:0006660">
    <property type="term" value="P:phosphatidylserine catabolic process"/>
    <property type="evidence" value="ECO:0000250"/>
    <property type="project" value="UniProtKB"/>
</dbReference>
<dbReference type="FunFam" id="3.40.50.1820:FF:000074">
    <property type="entry name" value="Abhydrolase domain containing 16A"/>
    <property type="match status" value="1"/>
</dbReference>
<dbReference type="Gene3D" id="3.40.50.1820">
    <property type="entry name" value="alpha/beta hydrolase"/>
    <property type="match status" value="1"/>
</dbReference>
<dbReference type="InterPro" id="IPR000073">
    <property type="entry name" value="AB_hydrolase_1"/>
</dbReference>
<dbReference type="InterPro" id="IPR029058">
    <property type="entry name" value="AB_hydrolase_fold"/>
</dbReference>
<dbReference type="InterPro" id="IPR054518">
    <property type="entry name" value="ABHD16_N"/>
</dbReference>
<dbReference type="PANTHER" id="PTHR12277">
    <property type="entry name" value="ALPHA/BETA HYDROLASE DOMAIN-CONTAINING PROTEIN"/>
    <property type="match status" value="1"/>
</dbReference>
<dbReference type="PANTHER" id="PTHR12277:SF54">
    <property type="entry name" value="PHOSPHATIDYLSERINE LIPASE ABHD16A"/>
    <property type="match status" value="1"/>
</dbReference>
<dbReference type="Pfam" id="PF22990">
    <property type="entry name" value="ABHD16_N"/>
    <property type="match status" value="1"/>
</dbReference>
<dbReference type="Pfam" id="PF00561">
    <property type="entry name" value="Abhydrolase_1"/>
    <property type="match status" value="1"/>
</dbReference>
<dbReference type="SUPFAM" id="SSF53474">
    <property type="entry name" value="alpha/beta-Hydrolases"/>
    <property type="match status" value="1"/>
</dbReference>
<reference key="1">
    <citation type="journal article" date="2005" name="BMC Genomics">
        <title>Characterization of 954 bovine full-CDS cDNA sequences.</title>
        <authorList>
            <person name="Harhay G.P."/>
            <person name="Sonstegard T.S."/>
            <person name="Keele J.W."/>
            <person name="Heaton M.P."/>
            <person name="Clawson M.L."/>
            <person name="Snelling W.M."/>
            <person name="Wiedmann R.T."/>
            <person name="Van Tassell C.P."/>
            <person name="Smith T.P.L."/>
        </authorList>
    </citation>
    <scope>NUCLEOTIDE SEQUENCE [LARGE SCALE MRNA]</scope>
</reference>
<feature type="chain" id="PRO_0000333741" description="Phosphatidylserine lipase ABHD16A">
    <location>
        <begin position="1"/>
        <end position="558"/>
    </location>
</feature>
<feature type="transmembrane region" description="Helical" evidence="4">
    <location>
        <begin position="60"/>
        <end position="80"/>
    </location>
</feature>
<feature type="transmembrane region" description="Helical" evidence="4">
    <location>
        <begin position="93"/>
        <end position="113"/>
    </location>
</feature>
<feature type="topological domain" description="Cytoplasmic" evidence="3">
    <location>
        <begin position="114"/>
        <end position="558"/>
    </location>
</feature>
<feature type="domain" description="AB hydrolase-1" evidence="4">
    <location>
        <begin position="281"/>
        <end position="407"/>
    </location>
</feature>
<feature type="active site" description="Charge relay system" evidence="2">
    <location>
        <position position="355"/>
    </location>
</feature>
<feature type="active site" description="Charge relay system" evidence="2">
    <location>
        <position position="430"/>
    </location>
</feature>
<feature type="active site" description="Charge relay system" evidence="2">
    <location>
        <position position="507"/>
    </location>
</feature>
<name>ABHGA_BOVIN</name>
<accession>Q1JPD2</accession>
<evidence type="ECO:0000250" key="1">
    <source>
        <dbReference type="UniProtKB" id="O95870"/>
    </source>
</evidence>
<evidence type="ECO:0000250" key="2">
    <source>
        <dbReference type="UniProtKB" id="Q8N2K0"/>
    </source>
</evidence>
<evidence type="ECO:0000250" key="3">
    <source>
        <dbReference type="UniProtKB" id="Q9Z1Q2"/>
    </source>
</evidence>
<evidence type="ECO:0000255" key="4"/>
<evidence type="ECO:0000305" key="5"/>
<protein>
    <recommendedName>
        <fullName evidence="5">Phosphatidylserine lipase ABHD16A</fullName>
        <ecNumber evidence="3">3.1.-.-</ecNumber>
    </recommendedName>
    <alternativeName>
        <fullName evidence="5">Alpha/beta hydrolase domain-containing protein 16A</fullName>
        <shortName evidence="5">Abhydrolase domain-containing protein 16A</shortName>
    </alternativeName>
    <alternativeName>
        <fullName evidence="1">HLA-B-associated transcript 5 homolog</fullName>
    </alternativeName>
    <alternativeName>
        <fullName evidence="5">Monoacylglycerol lipase ABHD16A</fullName>
        <ecNumber evidence="1">3.1.1.23</ecNumber>
    </alternativeName>
</protein>
<sequence length="558" mass="63304">MAKLLSCVLGPRLYKIYRERDSERAPSSVPGTPTSVTNPHSSSWDTYYQPRALEKHADSILALASVFWSISYYSSPFAFFYLYRKGYLSLSKVVPFSHYAGTLLLLLAGVACLRGIGRWTNPQYRQFITILEATHRNHSAENKRQLANYNFDFRSWPVDFHWEEPSSRKESRGGPSRRGVALLRPEPLHRGTADTFLNRVKKLPCQITSYLVAHTLGRRMLYPGSVYLLQKALMPVLLQGQARLVEECHGRRAKLLACDGNEIDTMFVDRRGTAEPQGQKLVICCEGNAGFYEVGCVSTPLEAGYSVLGWNHPGFAGSTGVPFPQNEANAMDVVVQFAIHRLGFQPEDIILYAWSIGGFTATWAAMSYPDISAVILDASFDDLVPLALKVMPDSWRGLVTRTVRQHLNLNNAEQLCRYQGPVLLIRRTRDEIITTTVPEDIMSNRGNDLLLKFLQHRYPRVMAEEGLRVVRQWLEASSQLEEASIYSRWEVEEDWCLSVLRSYQAEHGPEFPWSVGEDMSADGRRQLALFLAQKHLNNFEATHCTPLPAQNFQMPWHL</sequence>
<comment type="function">
    <text evidence="1 3">Phosphatidylserine (PS) lipase that mediates the hydrolysis of phosphatidylserine to generate lysophosphatidylserine (LPS). LPS constitutes a class of signaling lipids that regulates immunological and neurological processes (By similarity). Has no activity towards diacylglycerol, triacylglycerol or lysophosphatidylserine lipase (By similarity). Also has monoacylglycerol lipase activity, with preference for 1-(9Z,12Z-octadecadienoyl)-glycerol (1-LG) and 2-glyceryl-15-deoxy-Delta(12,14)-prostaglandin J2 (15d-PGJ(2)-G) (By similarity).</text>
</comment>
<comment type="catalytic activity">
    <reaction evidence="3">
        <text>1-heptadecanoyl-2-(5Z,8Z,11Z,14Z-eicosatetraenoyl)-sn-glycero-3-phosphoserine + H2O = 1-heptadecanoyl-sn-glycero-3-phosphoserine + (5Z,8Z,11Z,14Z)-eicosatetraenoate + H(+)</text>
        <dbReference type="Rhea" id="RHEA:44500"/>
        <dbReference type="ChEBI" id="CHEBI:15377"/>
        <dbReference type="ChEBI" id="CHEBI:15378"/>
        <dbReference type="ChEBI" id="CHEBI:32395"/>
        <dbReference type="ChEBI" id="CHEBI:84461"/>
        <dbReference type="ChEBI" id="CHEBI:84462"/>
    </reaction>
</comment>
<comment type="catalytic activity">
    <reaction evidence="3">
        <text>1-hexadecanoyl-2-(9Z-octadecenoyl)-sn-glycero-3-phospho-L-serine + H2O = 1-hexadecanoyl-sn-glycero-3-phospho-L-serine + (9Z)-octadecenoate + H(+)</text>
        <dbReference type="Rhea" id="RHEA:41752"/>
        <dbReference type="ChEBI" id="CHEBI:15377"/>
        <dbReference type="ChEBI" id="CHEBI:15378"/>
        <dbReference type="ChEBI" id="CHEBI:30823"/>
        <dbReference type="ChEBI" id="CHEBI:75020"/>
        <dbReference type="ChEBI" id="CHEBI:75029"/>
    </reaction>
</comment>
<comment type="catalytic activity">
    <reaction evidence="3">
        <text>1-octadecanoyl-2-(9Z,12Z-octadecadienoyl)-sn-glycero-3-phosphoserine + H2O = 1-octadecanoyl-sn-glycero-3-phosphoserine + (9Z,12Z)-octadecadienoate + H(+)</text>
        <dbReference type="Rhea" id="RHEA:44516"/>
        <dbReference type="ChEBI" id="CHEBI:15377"/>
        <dbReference type="ChEBI" id="CHEBI:15378"/>
        <dbReference type="ChEBI" id="CHEBI:30245"/>
        <dbReference type="ChEBI" id="CHEBI:84466"/>
        <dbReference type="ChEBI" id="CHEBI:84467"/>
    </reaction>
</comment>
<comment type="catalytic activity">
    <reaction evidence="3">
        <text>1-heptadecanoyl-2-(5Z,8Z,11Z,14Z-eicosatetraenoyl)-sn-glycero-3-phosphocholine + H2O = 1-heptadecanoyl-sn-glycero-3-phosphocholine + (5Z,8Z,11Z,14Z)-eicosatetraenoate + H(+)</text>
        <dbReference type="Rhea" id="RHEA:44520"/>
        <dbReference type="ChEBI" id="CHEBI:15377"/>
        <dbReference type="ChEBI" id="CHEBI:15378"/>
        <dbReference type="ChEBI" id="CHEBI:32395"/>
        <dbReference type="ChEBI" id="CHEBI:74340"/>
        <dbReference type="ChEBI" id="CHEBI:84470"/>
    </reaction>
</comment>
<comment type="catalytic activity">
    <reaction evidence="3">
        <text>1-hexadecanoyl-2-(9Z-octadecenoyl)-sn-glycero-3-phosphoglycerol + H2O = 1-hexadecanoyl-sn-glycero-3-phosphoglycerol + (9Z)-octadecenoate + H(+)</text>
        <dbReference type="Rhea" id="RHEA:44524"/>
        <dbReference type="ChEBI" id="CHEBI:15377"/>
        <dbReference type="ChEBI" id="CHEBI:15378"/>
        <dbReference type="ChEBI" id="CHEBI:30823"/>
        <dbReference type="ChEBI" id="CHEBI:84472"/>
        <dbReference type="ChEBI" id="CHEBI:84475"/>
    </reaction>
</comment>
<comment type="catalytic activity">
    <reaction evidence="3">
        <text>1-hexadecanoyl-2-(9Z-octadecenoyl)-sn-glycero-3-phospho-(1D-myo-inositol) + H2O = 1-hexadecanoyl-sn-glycero-3-phospho-(1D-myo-inositol) + (9Z)-octadecenoate + H(+)</text>
        <dbReference type="Rhea" id="RHEA:44528"/>
        <dbReference type="ChEBI" id="CHEBI:15377"/>
        <dbReference type="ChEBI" id="CHEBI:15378"/>
        <dbReference type="ChEBI" id="CHEBI:30823"/>
        <dbReference type="ChEBI" id="CHEBI:72833"/>
        <dbReference type="ChEBI" id="CHEBI:72837"/>
    </reaction>
</comment>
<comment type="catalytic activity">
    <reaction evidence="3">
        <text>1-heptadecanoyl-2-(5Z,8Z,11Z,14Z-eicosatetraenoyl)-sn-glycero-3-phosphoethanolamine + H2O = 1-heptadecanoyl-sn-glycero-3-phosphoethanolamine + (5Z,8Z,11Z,14Z)-eicosatetraenoate + H(+)</text>
        <dbReference type="Rhea" id="RHEA:44540"/>
        <dbReference type="ChEBI" id="CHEBI:15377"/>
        <dbReference type="ChEBI" id="CHEBI:15378"/>
        <dbReference type="ChEBI" id="CHEBI:32395"/>
        <dbReference type="ChEBI" id="CHEBI:84489"/>
        <dbReference type="ChEBI" id="CHEBI:84490"/>
    </reaction>
</comment>
<comment type="catalytic activity">
    <reaction evidence="3">
        <text>1-hexadecanoyl-2-(9Z-octadecenoyl)-sn-glycero-3-phospho-(1'-sn-glycerol) + H2O = 1-hexadecanoyl-sn-glycero-3-phospho-(1'-sn-glycerol) + (9Z)-octadecenoate + H(+)</text>
        <dbReference type="Rhea" id="RHEA:40919"/>
        <dbReference type="ChEBI" id="CHEBI:15377"/>
        <dbReference type="ChEBI" id="CHEBI:15378"/>
        <dbReference type="ChEBI" id="CHEBI:30823"/>
        <dbReference type="ChEBI" id="CHEBI:72841"/>
        <dbReference type="ChEBI" id="CHEBI:75158"/>
    </reaction>
</comment>
<comment type="catalytic activity">
    <reaction evidence="1">
        <text>Hydrolyzes glycerol monoesters of long-chain fatty acids.</text>
        <dbReference type="EC" id="3.1.1.23"/>
    </reaction>
</comment>
<comment type="catalytic activity">
    <reaction evidence="1">
        <text>1-tetradecanoylglycerol + H2O = tetradecanoate + glycerol + H(+)</text>
        <dbReference type="Rhea" id="RHEA:44312"/>
        <dbReference type="ChEBI" id="CHEBI:15377"/>
        <dbReference type="ChEBI" id="CHEBI:15378"/>
        <dbReference type="ChEBI" id="CHEBI:17754"/>
        <dbReference type="ChEBI" id="CHEBI:30807"/>
        <dbReference type="ChEBI" id="CHEBI:75562"/>
    </reaction>
</comment>
<comment type="catalytic activity">
    <reaction evidence="1">
        <text>2-hexadecanoylglycerol + H2O = glycerol + hexadecanoate + H(+)</text>
        <dbReference type="Rhea" id="RHEA:39963"/>
        <dbReference type="ChEBI" id="CHEBI:7896"/>
        <dbReference type="ChEBI" id="CHEBI:15377"/>
        <dbReference type="ChEBI" id="CHEBI:15378"/>
        <dbReference type="ChEBI" id="CHEBI:17754"/>
        <dbReference type="ChEBI" id="CHEBI:75455"/>
    </reaction>
</comment>
<comment type="catalytic activity">
    <reaction evidence="1">
        <text>1-(9Z-octadecenoyl)-glycerol + H2O = glycerol + (9Z)-octadecenoate + H(+)</text>
        <dbReference type="Rhea" id="RHEA:38487"/>
        <dbReference type="ChEBI" id="CHEBI:15377"/>
        <dbReference type="ChEBI" id="CHEBI:15378"/>
        <dbReference type="ChEBI" id="CHEBI:17754"/>
        <dbReference type="ChEBI" id="CHEBI:30823"/>
        <dbReference type="ChEBI" id="CHEBI:75342"/>
    </reaction>
</comment>
<comment type="catalytic activity">
    <reaction evidence="1">
        <text>2-(9Z-octadecenoyl)-glycerol + H2O = glycerol + (9Z)-octadecenoate + H(+)</text>
        <dbReference type="Rhea" id="RHEA:38491"/>
        <dbReference type="ChEBI" id="CHEBI:15377"/>
        <dbReference type="ChEBI" id="CHEBI:15378"/>
        <dbReference type="ChEBI" id="CHEBI:17754"/>
        <dbReference type="ChEBI" id="CHEBI:30823"/>
        <dbReference type="ChEBI" id="CHEBI:73990"/>
    </reaction>
</comment>
<comment type="catalytic activity">
    <reaction evidence="1">
        <text>2-(9Z,12Z-octadecadienoyl)-glycerol + H2O = (9Z,12Z)-octadecadienoate + glycerol + H(+)</text>
        <dbReference type="Rhea" id="RHEA:44732"/>
        <dbReference type="ChEBI" id="CHEBI:15377"/>
        <dbReference type="ChEBI" id="CHEBI:15378"/>
        <dbReference type="ChEBI" id="CHEBI:17754"/>
        <dbReference type="ChEBI" id="CHEBI:30245"/>
        <dbReference type="ChEBI" id="CHEBI:75457"/>
    </reaction>
</comment>
<comment type="catalytic activity">
    <reaction evidence="1">
        <text>1-(5Z,8Z,11Z,14Z-eicosatetraenoyl)-glycerol + H2O = glycerol + (5Z,8Z,11Z,14Z)-eicosatetraenoate + H(+)</text>
        <dbReference type="Rhea" id="RHEA:44728"/>
        <dbReference type="ChEBI" id="CHEBI:15377"/>
        <dbReference type="ChEBI" id="CHEBI:15378"/>
        <dbReference type="ChEBI" id="CHEBI:17754"/>
        <dbReference type="ChEBI" id="CHEBI:32395"/>
        <dbReference type="ChEBI" id="CHEBI:75612"/>
    </reaction>
</comment>
<comment type="catalytic activity">
    <reaction evidence="1">
        <text>2-(5Z,8Z,11Z,14Z-eicosatetraenoyl)-glycerol + H2O = glycerol + (5Z,8Z,11Z,14Z)-eicosatetraenoate + H(+)</text>
        <dbReference type="Rhea" id="RHEA:26132"/>
        <dbReference type="ChEBI" id="CHEBI:15377"/>
        <dbReference type="ChEBI" id="CHEBI:15378"/>
        <dbReference type="ChEBI" id="CHEBI:17754"/>
        <dbReference type="ChEBI" id="CHEBI:32395"/>
        <dbReference type="ChEBI" id="CHEBI:52392"/>
    </reaction>
</comment>
<comment type="catalytic activity">
    <reaction evidence="1">
        <text>prostaglandin D2-1-glycerol ester + H2O = prostaglandin D2 + glycerol + H(+)</text>
        <dbReference type="Rhea" id="RHEA:45412"/>
        <dbReference type="ChEBI" id="CHEBI:15377"/>
        <dbReference type="ChEBI" id="CHEBI:15378"/>
        <dbReference type="ChEBI" id="CHEBI:17754"/>
        <dbReference type="ChEBI" id="CHEBI:57406"/>
        <dbReference type="ChEBI" id="CHEBI:85232"/>
    </reaction>
</comment>
<comment type="catalytic activity">
    <reaction evidence="3">
        <text>2-glyceryl-15-deoxy-Delta(12,14)-prostaglandin J2 + H2O = 15-deoxy-Delta(12,14)-prostaglandin J2 + glycerol + H(+)</text>
        <dbReference type="Rhea" id="RHEA:45416"/>
        <dbReference type="ChEBI" id="CHEBI:15377"/>
        <dbReference type="ChEBI" id="CHEBI:15378"/>
        <dbReference type="ChEBI" id="CHEBI:17754"/>
        <dbReference type="ChEBI" id="CHEBI:85236"/>
        <dbReference type="ChEBI" id="CHEBI:85238"/>
    </reaction>
</comment>
<comment type="catalytic activity">
    <reaction evidence="3">
        <text>1-(9Z,12Z-octadecadienoyl)-glycerol + H2O = (9Z,12Z)-octadecadienoate + glycerol + H(+)</text>
        <dbReference type="Rhea" id="RHEA:48428"/>
        <dbReference type="ChEBI" id="CHEBI:15377"/>
        <dbReference type="ChEBI" id="CHEBI:15378"/>
        <dbReference type="ChEBI" id="CHEBI:17754"/>
        <dbReference type="ChEBI" id="CHEBI:30245"/>
        <dbReference type="ChEBI" id="CHEBI:75568"/>
    </reaction>
</comment>
<comment type="subcellular location">
    <subcellularLocation>
        <location evidence="3">Membrane</location>
        <topology evidence="4">Multi-pass membrane protein</topology>
    </subcellularLocation>
</comment>
<comment type="similarity">
    <text evidence="5">Belongs to the AB hydrolase superfamily. ABHD16 family.</text>
</comment>
<proteinExistence type="evidence at transcript level"/>